<keyword id="KW-1185">Reference proteome</keyword>
<dbReference type="EMBL" id="AC084218">
    <property type="protein sequence ID" value="AAV32206.1"/>
    <property type="molecule type" value="Genomic_DNA"/>
</dbReference>
<dbReference type="EMBL" id="AC093493">
    <property type="protein sequence ID" value="AAU44143.1"/>
    <property type="molecule type" value="Genomic_DNA"/>
</dbReference>
<dbReference type="EMBL" id="AP008211">
    <property type="protein sequence ID" value="BAF16586.1"/>
    <property type="molecule type" value="Genomic_DNA"/>
</dbReference>
<dbReference type="EMBL" id="AP014961">
    <property type="protein sequence ID" value="BAS92316.1"/>
    <property type="molecule type" value="Genomic_DNA"/>
</dbReference>
<dbReference type="EMBL" id="CM000142">
    <property type="protein sequence ID" value="EAZ32909.1"/>
    <property type="molecule type" value="Genomic_DNA"/>
</dbReference>
<dbReference type="EMBL" id="CM000142">
    <property type="protein sequence ID" value="EEE62359.1"/>
    <property type="molecule type" value="Genomic_DNA"/>
</dbReference>
<dbReference type="EMBL" id="AK243548">
    <property type="protein sequence ID" value="BAH01647.1"/>
    <property type="molecule type" value="mRNA"/>
</dbReference>
<dbReference type="RefSeq" id="XP_015639219.1">
    <property type="nucleotide sequence ID" value="XM_015783733.1"/>
</dbReference>
<dbReference type="FunCoup" id="Q9FRA7">
    <property type="interactions" value="7"/>
</dbReference>
<dbReference type="PaxDb" id="39947-Q9FRA7"/>
<dbReference type="EnsemblPlants" id="Os05t0151300-01">
    <property type="protein sequence ID" value="Os05t0151300-01"/>
    <property type="gene ID" value="Os05g0151300"/>
</dbReference>
<dbReference type="Gramene" id="Os05t0151300-01">
    <property type="protein sequence ID" value="Os05t0151300-01"/>
    <property type="gene ID" value="Os05g0151300"/>
</dbReference>
<dbReference type="KEGG" id="dosa:Os05g0151300"/>
<dbReference type="eggNOG" id="ENOG502QUI7">
    <property type="taxonomic scope" value="Eukaryota"/>
</dbReference>
<dbReference type="HOGENOM" id="CLU_069928_1_0_1"/>
<dbReference type="InParanoid" id="Q9FRA7"/>
<dbReference type="OMA" id="SEKYNVM"/>
<dbReference type="OrthoDB" id="1905464at2759"/>
<dbReference type="Proteomes" id="UP000000763">
    <property type="component" value="Chromosome 5"/>
</dbReference>
<dbReference type="Proteomes" id="UP000007752">
    <property type="component" value="Chromosome 5"/>
</dbReference>
<dbReference type="Proteomes" id="UP000059680">
    <property type="component" value="Chromosome 5"/>
</dbReference>
<dbReference type="InterPro" id="IPR008802">
    <property type="entry name" value="REF"/>
</dbReference>
<dbReference type="PANTHER" id="PTHR33732">
    <property type="entry name" value="REF/SRPP-LIKE PROTEIN OS05G0151300/LOC_OS05G05940"/>
    <property type="match status" value="1"/>
</dbReference>
<dbReference type="PANTHER" id="PTHR33732:SF9">
    <property type="entry name" value="REF_SRPP-LIKE PROTEIN OS05G0151300_LOC_OS05G05940"/>
    <property type="match status" value="1"/>
</dbReference>
<dbReference type="Pfam" id="PF05755">
    <property type="entry name" value="REF"/>
    <property type="match status" value="1"/>
</dbReference>
<protein>
    <recommendedName>
        <fullName>REF/SRPP-like protein Os05g0151300/LOC_Os05g05940</fullName>
    </recommendedName>
</protein>
<reference key="1">
    <citation type="journal article" date="2005" name="Mol. Genet. Genomics">
        <title>A fine physical map of the rice chromosome 5.</title>
        <authorList>
            <person name="Cheng C.-H."/>
            <person name="Chung M.C."/>
            <person name="Liu S.-M."/>
            <person name="Chen S.-K."/>
            <person name="Kao F.Y."/>
            <person name="Lin S.-J."/>
            <person name="Hsiao S.-H."/>
            <person name="Tseng I.C."/>
            <person name="Hsing Y.-I.C."/>
            <person name="Wu H.-P."/>
            <person name="Chen C.-S."/>
            <person name="Shaw J.-F."/>
            <person name="Wu J."/>
            <person name="Matsumoto T."/>
            <person name="Sasaki T."/>
            <person name="Chen H.-C."/>
            <person name="Chow T.-Y."/>
        </authorList>
    </citation>
    <scope>NUCLEOTIDE SEQUENCE [LARGE SCALE GENOMIC DNA]</scope>
    <source>
        <strain>cv. Nipponbare</strain>
    </source>
</reference>
<reference key="2">
    <citation type="journal article" date="2005" name="Nature">
        <title>The map-based sequence of the rice genome.</title>
        <authorList>
            <consortium name="International rice genome sequencing project (IRGSP)"/>
        </authorList>
    </citation>
    <scope>NUCLEOTIDE SEQUENCE [LARGE SCALE GENOMIC DNA]</scope>
    <source>
        <strain>cv. Nipponbare</strain>
    </source>
</reference>
<reference key="3">
    <citation type="journal article" date="2008" name="Nucleic Acids Res.">
        <title>The rice annotation project database (RAP-DB): 2008 update.</title>
        <authorList>
            <consortium name="The rice annotation project (RAP)"/>
        </authorList>
    </citation>
    <scope>GENOME REANNOTATION</scope>
    <source>
        <strain>cv. Nipponbare</strain>
    </source>
</reference>
<reference key="4">
    <citation type="journal article" date="2013" name="Rice">
        <title>Improvement of the Oryza sativa Nipponbare reference genome using next generation sequence and optical map data.</title>
        <authorList>
            <person name="Kawahara Y."/>
            <person name="de la Bastide M."/>
            <person name="Hamilton J.P."/>
            <person name="Kanamori H."/>
            <person name="McCombie W.R."/>
            <person name="Ouyang S."/>
            <person name="Schwartz D.C."/>
            <person name="Tanaka T."/>
            <person name="Wu J."/>
            <person name="Zhou S."/>
            <person name="Childs K.L."/>
            <person name="Davidson R.M."/>
            <person name="Lin H."/>
            <person name="Quesada-Ocampo L."/>
            <person name="Vaillancourt B."/>
            <person name="Sakai H."/>
            <person name="Lee S.S."/>
            <person name="Kim J."/>
            <person name="Numa H."/>
            <person name="Itoh T."/>
            <person name="Buell C.R."/>
            <person name="Matsumoto T."/>
        </authorList>
    </citation>
    <scope>GENOME REANNOTATION</scope>
    <source>
        <strain>cv. Nipponbare</strain>
    </source>
</reference>
<reference key="5">
    <citation type="journal article" date="2005" name="PLoS Biol.">
        <title>The genomes of Oryza sativa: a history of duplications.</title>
        <authorList>
            <person name="Yu J."/>
            <person name="Wang J."/>
            <person name="Lin W."/>
            <person name="Li S."/>
            <person name="Li H."/>
            <person name="Zhou J."/>
            <person name="Ni P."/>
            <person name="Dong W."/>
            <person name="Hu S."/>
            <person name="Zeng C."/>
            <person name="Zhang J."/>
            <person name="Zhang Y."/>
            <person name="Li R."/>
            <person name="Xu Z."/>
            <person name="Li S."/>
            <person name="Li X."/>
            <person name="Zheng H."/>
            <person name="Cong L."/>
            <person name="Lin L."/>
            <person name="Yin J."/>
            <person name="Geng J."/>
            <person name="Li G."/>
            <person name="Shi J."/>
            <person name="Liu J."/>
            <person name="Lv H."/>
            <person name="Li J."/>
            <person name="Wang J."/>
            <person name="Deng Y."/>
            <person name="Ran L."/>
            <person name="Shi X."/>
            <person name="Wang X."/>
            <person name="Wu Q."/>
            <person name="Li C."/>
            <person name="Ren X."/>
            <person name="Wang J."/>
            <person name="Wang X."/>
            <person name="Li D."/>
            <person name="Liu D."/>
            <person name="Zhang X."/>
            <person name="Ji Z."/>
            <person name="Zhao W."/>
            <person name="Sun Y."/>
            <person name="Zhang Z."/>
            <person name="Bao J."/>
            <person name="Han Y."/>
            <person name="Dong L."/>
            <person name="Ji J."/>
            <person name="Chen P."/>
            <person name="Wu S."/>
            <person name="Liu J."/>
            <person name="Xiao Y."/>
            <person name="Bu D."/>
            <person name="Tan J."/>
            <person name="Yang L."/>
            <person name="Ye C."/>
            <person name="Zhang J."/>
            <person name="Xu J."/>
            <person name="Zhou Y."/>
            <person name="Yu Y."/>
            <person name="Zhang B."/>
            <person name="Zhuang S."/>
            <person name="Wei H."/>
            <person name="Liu B."/>
            <person name="Lei M."/>
            <person name="Yu H."/>
            <person name="Li Y."/>
            <person name="Xu H."/>
            <person name="Wei S."/>
            <person name="He X."/>
            <person name="Fang L."/>
            <person name="Zhang Z."/>
            <person name="Zhang Y."/>
            <person name="Huang X."/>
            <person name="Su Z."/>
            <person name="Tong W."/>
            <person name="Li J."/>
            <person name="Tong Z."/>
            <person name="Li S."/>
            <person name="Ye J."/>
            <person name="Wang L."/>
            <person name="Fang L."/>
            <person name="Lei T."/>
            <person name="Chen C.-S."/>
            <person name="Chen H.-C."/>
            <person name="Xu Z."/>
            <person name="Li H."/>
            <person name="Huang H."/>
            <person name="Zhang F."/>
            <person name="Xu H."/>
            <person name="Li N."/>
            <person name="Zhao C."/>
            <person name="Li S."/>
            <person name="Dong L."/>
            <person name="Huang Y."/>
            <person name="Li L."/>
            <person name="Xi Y."/>
            <person name="Qi Q."/>
            <person name="Li W."/>
            <person name="Zhang B."/>
            <person name="Hu W."/>
            <person name="Zhang Y."/>
            <person name="Tian X."/>
            <person name="Jiao Y."/>
            <person name="Liang X."/>
            <person name="Jin J."/>
            <person name="Gao L."/>
            <person name="Zheng W."/>
            <person name="Hao B."/>
            <person name="Liu S.-M."/>
            <person name="Wang W."/>
            <person name="Yuan L."/>
            <person name="Cao M."/>
            <person name="McDermott J."/>
            <person name="Samudrala R."/>
            <person name="Wang J."/>
            <person name="Wong G.K.-S."/>
            <person name="Yang H."/>
        </authorList>
    </citation>
    <scope>NUCLEOTIDE SEQUENCE [LARGE SCALE GENOMIC DNA]</scope>
    <source>
        <strain>cv. Nipponbare</strain>
    </source>
</reference>
<reference key="6">
    <citation type="submission" date="2006-10" db="EMBL/GenBank/DDBJ databases">
        <title>Oryza sativa full length cDNA.</title>
        <authorList>
            <consortium name="The rice full-length cDNA consortium"/>
        </authorList>
    </citation>
    <scope>NUCLEOTIDE SEQUENCE [LARGE SCALE MRNA]</scope>
    <source>
        <strain>cv. Nipponbare</strain>
    </source>
</reference>
<sequence>MADSGSDAPISNRPEEEVTVEKTPEMEAAAEEERLRYLEFVQQAAAQVLVLAAAAYAYAKQGAGPLRPGVDHVEGTVKAVVGPVYDRFHGVPLDLLKFLDRKVGESVQELDRRVPPVVKEAPGLARSAAAEVRQAGLVGTATGLAKSAIARAEPRARDLYTRYEPVAERKAAEAWAALNRLPLVPSVTRAVLPAAASLSARYNTAVADGAKRGSAVATYLPLVPTERLSRVFGYPLADAATSPAPEMQPIPSQ</sequence>
<name>Y5513_ORYSJ</name>
<feature type="chain" id="PRO_0000221067" description="REF/SRPP-like protein Os05g0151300/LOC_Os05g05940">
    <location>
        <begin position="1"/>
        <end position="253"/>
    </location>
</feature>
<feature type="region of interest" description="Disordered" evidence="1">
    <location>
        <begin position="1"/>
        <end position="26"/>
    </location>
</feature>
<feature type="compositionally biased region" description="Basic and acidic residues" evidence="1">
    <location>
        <begin position="13"/>
        <end position="26"/>
    </location>
</feature>
<proteinExistence type="evidence at transcript level"/>
<accession>Q9FRA7</accession>
<accession>B7FAJ9</accession>
<accession>Q0DKN7</accession>
<accession>Q65XQ9</accession>
<organism>
    <name type="scientific">Oryza sativa subsp. japonica</name>
    <name type="common">Rice</name>
    <dbReference type="NCBI Taxonomy" id="39947"/>
    <lineage>
        <taxon>Eukaryota</taxon>
        <taxon>Viridiplantae</taxon>
        <taxon>Streptophyta</taxon>
        <taxon>Embryophyta</taxon>
        <taxon>Tracheophyta</taxon>
        <taxon>Spermatophyta</taxon>
        <taxon>Magnoliopsida</taxon>
        <taxon>Liliopsida</taxon>
        <taxon>Poales</taxon>
        <taxon>Poaceae</taxon>
        <taxon>BOP clade</taxon>
        <taxon>Oryzoideae</taxon>
        <taxon>Oryzeae</taxon>
        <taxon>Oryzinae</taxon>
        <taxon>Oryza</taxon>
        <taxon>Oryza sativa</taxon>
    </lineage>
</organism>
<gene>
    <name type="ordered locus">Os05g0151300</name>
    <name type="ordered locus">LOC_Os05g05940</name>
    <name type="ORF">OsJ_016392</name>
    <name evidence="3" type="ORF">OsJ_17148</name>
    <name type="ORF">OSJNBa0072C16.2</name>
    <name type="ORF">P0001A07.13</name>
</gene>
<comment type="similarity">
    <text evidence="2">Belongs to the REF/SRPP family.</text>
</comment>
<evidence type="ECO:0000256" key="1">
    <source>
        <dbReference type="SAM" id="MobiDB-lite"/>
    </source>
</evidence>
<evidence type="ECO:0000305" key="2"/>
<evidence type="ECO:0000312" key="3">
    <source>
        <dbReference type="EMBL" id="EEE62359.1"/>
    </source>
</evidence>